<dbReference type="EMBL" id="U43564">
    <property type="protein sequence ID" value="AAB38821.1"/>
    <property type="molecule type" value="Genomic_DNA"/>
</dbReference>
<dbReference type="EMBL" id="X96876">
    <property type="protein sequence ID" value="CAA65628.1"/>
    <property type="molecule type" value="Genomic_DNA"/>
</dbReference>
<dbReference type="EMBL" id="Z74180">
    <property type="protein sequence ID" value="CAA98702.1"/>
    <property type="molecule type" value="Genomic_DNA"/>
</dbReference>
<dbReference type="EMBL" id="BK006938">
    <property type="protein sequence ID" value="DAA11727.1"/>
    <property type="molecule type" value="Genomic_DNA"/>
</dbReference>
<dbReference type="PIR" id="S67675">
    <property type="entry name" value="S67675"/>
</dbReference>
<dbReference type="RefSeq" id="NP_010150.1">
    <property type="nucleotide sequence ID" value="NM_001180191.1"/>
</dbReference>
<dbReference type="PDB" id="3O2P">
    <property type="method" value="X-ray"/>
    <property type="resolution" value="2.23 A"/>
    <property type="chains" value="E=730-815"/>
</dbReference>
<dbReference type="PDB" id="3O6B">
    <property type="method" value="X-ray"/>
    <property type="resolution" value="3.10 A"/>
    <property type="chains" value="B/D/F/H/J=742-815"/>
</dbReference>
<dbReference type="PDBsum" id="3O2P"/>
<dbReference type="PDBsum" id="3O6B"/>
<dbReference type="SMR" id="Q12018"/>
<dbReference type="BioGRID" id="31930">
    <property type="interactions" value="545"/>
</dbReference>
<dbReference type="ComplexPortal" id="CPX-3234">
    <property type="entry name" value="SCF-Cdc4 ubiquitin ligase complex"/>
</dbReference>
<dbReference type="ComplexPortal" id="CPX-3241">
    <property type="entry name" value="SCF-Grr1 ubiquitin ligase complex"/>
</dbReference>
<dbReference type="ComplexPortal" id="CPX-3242">
    <property type="entry name" value="SCF-Mdm30 ubiquitin ligase complex"/>
</dbReference>
<dbReference type="ComplexPortal" id="CPX-3243">
    <property type="entry name" value="SCF-Ufo1 ubiquitin ligase complex"/>
</dbReference>
<dbReference type="ComplexPortal" id="CPX-3244">
    <property type="entry name" value="SCF-Das1 ubiquitin ligase complex"/>
</dbReference>
<dbReference type="ComplexPortal" id="CPX-3249">
    <property type="entry name" value="SCF-MET30 E3 ubiquitin ligase complex"/>
</dbReference>
<dbReference type="ComplexPortal" id="CPX-3250">
    <property type="entry name" value="SCF-Dia2 ubiquitin ligase complex"/>
</dbReference>
<dbReference type="ComplexPortal" id="CPX-3253">
    <property type="entry name" value="SCF-Ylr352w ubiquitin ligase complex"/>
</dbReference>
<dbReference type="ComplexPortal" id="CPX-3254">
    <property type="entry name" value="SCF-Saf1 ubiquitin ligase complex"/>
</dbReference>
<dbReference type="ComplexPortal" id="CPX-3255">
    <property type="entry name" value="SCF-Hrt3 ubiquitin ligase complex"/>
</dbReference>
<dbReference type="ComplexPortal" id="CPX-3681">
    <property type="entry name" value="SCF-Ydr131c ubiquitin ligase complex"/>
</dbReference>
<dbReference type="DIP" id="DIP-1234N"/>
<dbReference type="FunCoup" id="Q12018">
    <property type="interactions" value="1297"/>
</dbReference>
<dbReference type="IntAct" id="Q12018">
    <property type="interactions" value="78"/>
</dbReference>
<dbReference type="MINT" id="Q12018"/>
<dbReference type="STRING" id="4932.YDL132W"/>
<dbReference type="MoonDB" id="Q12018">
    <property type="type" value="Predicted"/>
</dbReference>
<dbReference type="iPTMnet" id="Q12018"/>
<dbReference type="PaxDb" id="4932-YDL132W"/>
<dbReference type="PeptideAtlas" id="Q12018"/>
<dbReference type="EnsemblFungi" id="YDL132W_mRNA">
    <property type="protein sequence ID" value="YDL132W"/>
    <property type="gene ID" value="YDL132W"/>
</dbReference>
<dbReference type="GeneID" id="851424"/>
<dbReference type="KEGG" id="sce:YDL132W"/>
<dbReference type="AGR" id="SGD:S000002290"/>
<dbReference type="SGD" id="S000002290">
    <property type="gene designation" value="CDC53"/>
</dbReference>
<dbReference type="VEuPathDB" id="FungiDB:YDL132W"/>
<dbReference type="eggNOG" id="KOG2166">
    <property type="taxonomic scope" value="Eukaryota"/>
</dbReference>
<dbReference type="GeneTree" id="ENSGT00940000154774"/>
<dbReference type="HOGENOM" id="CLU_004747_6_1_1"/>
<dbReference type="InParanoid" id="Q12018"/>
<dbReference type="OMA" id="IREWDRY"/>
<dbReference type="OrthoDB" id="27073at2759"/>
<dbReference type="BioCyc" id="YEAST:G3O-29530-MONOMER"/>
<dbReference type="Reactome" id="R-SCE-68949">
    <property type="pathway name" value="Orc1 removal from chromatin"/>
</dbReference>
<dbReference type="Reactome" id="R-SCE-8854050">
    <property type="pathway name" value="FBXL7 down-regulates AURKA during mitotic entry and in early mitosis"/>
</dbReference>
<dbReference type="Reactome" id="R-SCE-917937">
    <property type="pathway name" value="Iron uptake and transport"/>
</dbReference>
<dbReference type="Reactome" id="R-SCE-983168">
    <property type="pathway name" value="Antigen processing: Ubiquitination &amp; Proteasome degradation"/>
</dbReference>
<dbReference type="BioGRID-ORCS" id="851424">
    <property type="hits" value="1 hit in 10 CRISPR screens"/>
</dbReference>
<dbReference type="CD-CODE" id="E03F929F">
    <property type="entry name" value="Stress granule"/>
</dbReference>
<dbReference type="EvolutionaryTrace" id="Q12018"/>
<dbReference type="PRO" id="PR:Q12018"/>
<dbReference type="Proteomes" id="UP000002311">
    <property type="component" value="Chromosome IV"/>
</dbReference>
<dbReference type="RNAct" id="Q12018">
    <property type="molecule type" value="protein"/>
</dbReference>
<dbReference type="GO" id="GO:0000781">
    <property type="term" value="C:chromosome, telomeric region"/>
    <property type="evidence" value="ECO:0007669"/>
    <property type="project" value="GOC"/>
</dbReference>
<dbReference type="GO" id="GO:0005737">
    <property type="term" value="C:cytoplasm"/>
    <property type="evidence" value="ECO:0007669"/>
    <property type="project" value="UniProtKB-SubCell"/>
</dbReference>
<dbReference type="GO" id="GO:0005634">
    <property type="term" value="C:nucleus"/>
    <property type="evidence" value="ECO:0007669"/>
    <property type="project" value="UniProtKB-SubCell"/>
</dbReference>
<dbReference type="GO" id="GO:0019005">
    <property type="term" value="C:SCF ubiquitin ligase complex"/>
    <property type="evidence" value="ECO:0000314"/>
    <property type="project" value="ComplexPortal"/>
</dbReference>
<dbReference type="GO" id="GO:0003688">
    <property type="term" value="F:DNA replication origin binding"/>
    <property type="evidence" value="ECO:0000314"/>
    <property type="project" value="SGD"/>
</dbReference>
<dbReference type="GO" id="GO:0030674">
    <property type="term" value="F:protein-macromolecule adaptor activity"/>
    <property type="evidence" value="ECO:0000315"/>
    <property type="project" value="SGD"/>
</dbReference>
<dbReference type="GO" id="GO:0031625">
    <property type="term" value="F:ubiquitin protein ligase binding"/>
    <property type="evidence" value="ECO:0000318"/>
    <property type="project" value="GO_Central"/>
</dbReference>
<dbReference type="GO" id="GO:0051301">
    <property type="term" value="P:cell division"/>
    <property type="evidence" value="ECO:0007669"/>
    <property type="project" value="UniProtKB-KW"/>
</dbReference>
<dbReference type="GO" id="GO:0071406">
    <property type="term" value="P:cellular response to methylmercury"/>
    <property type="evidence" value="ECO:0000303"/>
    <property type="project" value="ComplexPortal"/>
</dbReference>
<dbReference type="GO" id="GO:0000082">
    <property type="term" value="P:G1/S transition of mitotic cell cycle"/>
    <property type="evidence" value="ECO:0000314"/>
    <property type="project" value="ComplexPortal"/>
</dbReference>
<dbReference type="GO" id="GO:0000086">
    <property type="term" value="P:G2/M transition of mitotic cell cycle"/>
    <property type="evidence" value="ECO:0000316"/>
    <property type="project" value="SGD"/>
</dbReference>
<dbReference type="GO" id="GO:0008053">
    <property type="term" value="P:mitochondrial fusion"/>
    <property type="evidence" value="ECO:0000303"/>
    <property type="project" value="ComplexPortal"/>
</dbReference>
<dbReference type="GO" id="GO:0031573">
    <property type="term" value="P:mitotic intra-S DNA damage checkpoint signaling"/>
    <property type="evidence" value="ECO:0000303"/>
    <property type="project" value="ComplexPortal"/>
</dbReference>
<dbReference type="GO" id="GO:0010828">
    <property type="term" value="P:positive regulation of D-glucose transmembrane transport"/>
    <property type="evidence" value="ECO:0000314"/>
    <property type="project" value="ComplexPortal"/>
</dbReference>
<dbReference type="GO" id="GO:0016567">
    <property type="term" value="P:protein ubiquitination"/>
    <property type="evidence" value="ECO:0000318"/>
    <property type="project" value="GO_Central"/>
</dbReference>
<dbReference type="GO" id="GO:0019222">
    <property type="term" value="P:regulation of metabolic process"/>
    <property type="evidence" value="ECO:0000303"/>
    <property type="project" value="ComplexPortal"/>
</dbReference>
<dbReference type="GO" id="GO:0007346">
    <property type="term" value="P:regulation of mitotic cell cycle"/>
    <property type="evidence" value="ECO:0000303"/>
    <property type="project" value="ComplexPortal"/>
</dbReference>
<dbReference type="GO" id="GO:0031335">
    <property type="term" value="P:regulation of sulfur amino acid metabolic process"/>
    <property type="evidence" value="ECO:0000303"/>
    <property type="project" value="ComplexPortal"/>
</dbReference>
<dbReference type="GO" id="GO:0000409">
    <property type="term" value="P:regulation of transcription by galactose"/>
    <property type="evidence" value="ECO:0000303"/>
    <property type="project" value="ComplexPortal"/>
</dbReference>
<dbReference type="GO" id="GO:0031146">
    <property type="term" value="P:SCF-dependent proteasomal ubiquitin-dependent protein catabolic process"/>
    <property type="evidence" value="ECO:0000314"/>
    <property type="project" value="SGD"/>
</dbReference>
<dbReference type="GO" id="GO:0030466">
    <property type="term" value="P:silent mating-type cassette heterochromatin formation"/>
    <property type="evidence" value="ECO:0000314"/>
    <property type="project" value="ComplexPortal"/>
</dbReference>
<dbReference type="GO" id="GO:0031509">
    <property type="term" value="P:subtelomeric heterochromatin formation"/>
    <property type="evidence" value="ECO:0000303"/>
    <property type="project" value="ComplexPortal"/>
</dbReference>
<dbReference type="GO" id="GO:0006511">
    <property type="term" value="P:ubiquitin-dependent protein catabolic process"/>
    <property type="evidence" value="ECO:0000314"/>
    <property type="project" value="ComplexPortal"/>
</dbReference>
<dbReference type="FunFam" id="1.20.1310.10:FF:000038">
    <property type="entry name" value="CDC53p Cullin"/>
    <property type="match status" value="1"/>
</dbReference>
<dbReference type="FunFam" id="1.20.1310.10:FF:000046">
    <property type="entry name" value="CDC53p Cullin"/>
    <property type="match status" value="1"/>
</dbReference>
<dbReference type="FunFam" id="1.20.1310.10:FF:000063">
    <property type="entry name" value="CDC53p Cullin"/>
    <property type="match status" value="1"/>
</dbReference>
<dbReference type="FunFam" id="3.30.230.130:FF:000014">
    <property type="entry name" value="CDC53p Cullin"/>
    <property type="match status" value="1"/>
</dbReference>
<dbReference type="FunFam" id="1.10.10.10:FF:000675">
    <property type="entry name" value="Cell division cycle-related protein"/>
    <property type="match status" value="1"/>
</dbReference>
<dbReference type="FunFam" id="1.20.1310.10:FF:000029">
    <property type="entry name" value="Cullin homolog 1"/>
    <property type="match status" value="1"/>
</dbReference>
<dbReference type="Gene3D" id="1.20.1310.10">
    <property type="entry name" value="Cullin Repeats"/>
    <property type="match status" value="4"/>
</dbReference>
<dbReference type="Gene3D" id="3.30.230.130">
    <property type="entry name" value="Cullin, Chain C, Domain 2"/>
    <property type="match status" value="1"/>
</dbReference>
<dbReference type="Gene3D" id="1.10.10.10">
    <property type="entry name" value="Winged helix-like DNA-binding domain superfamily/Winged helix DNA-binding domain"/>
    <property type="match status" value="1"/>
</dbReference>
<dbReference type="InterPro" id="IPR045093">
    <property type="entry name" value="Cullin"/>
</dbReference>
<dbReference type="InterPro" id="IPR016157">
    <property type="entry name" value="Cullin_CS"/>
</dbReference>
<dbReference type="InterPro" id="IPR016158">
    <property type="entry name" value="Cullin_homology"/>
</dbReference>
<dbReference type="InterPro" id="IPR036317">
    <property type="entry name" value="Cullin_homology_sf"/>
</dbReference>
<dbReference type="InterPro" id="IPR001373">
    <property type="entry name" value="Cullin_N"/>
</dbReference>
<dbReference type="InterPro" id="IPR019559">
    <property type="entry name" value="Cullin_neddylation_domain"/>
</dbReference>
<dbReference type="InterPro" id="IPR016159">
    <property type="entry name" value="Cullin_repeat-like_dom_sf"/>
</dbReference>
<dbReference type="InterPro" id="IPR036388">
    <property type="entry name" value="WH-like_DNA-bd_sf"/>
</dbReference>
<dbReference type="InterPro" id="IPR036390">
    <property type="entry name" value="WH_DNA-bd_sf"/>
</dbReference>
<dbReference type="PANTHER" id="PTHR11932">
    <property type="entry name" value="CULLIN"/>
    <property type="match status" value="1"/>
</dbReference>
<dbReference type="Pfam" id="PF00888">
    <property type="entry name" value="Cullin"/>
    <property type="match status" value="1"/>
</dbReference>
<dbReference type="Pfam" id="PF10557">
    <property type="entry name" value="Cullin_Nedd8"/>
    <property type="match status" value="1"/>
</dbReference>
<dbReference type="SMART" id="SM00182">
    <property type="entry name" value="CULLIN"/>
    <property type="match status" value="1"/>
</dbReference>
<dbReference type="SMART" id="SM00884">
    <property type="entry name" value="Cullin_Nedd8"/>
    <property type="match status" value="1"/>
</dbReference>
<dbReference type="SUPFAM" id="SSF75632">
    <property type="entry name" value="Cullin homology domain"/>
    <property type="match status" value="1"/>
</dbReference>
<dbReference type="SUPFAM" id="SSF74788">
    <property type="entry name" value="Cullin repeat-like"/>
    <property type="match status" value="1"/>
</dbReference>
<dbReference type="SUPFAM" id="SSF46785">
    <property type="entry name" value="Winged helix' DNA-binding domain"/>
    <property type="match status" value="1"/>
</dbReference>
<dbReference type="PROSITE" id="PS01256">
    <property type="entry name" value="CULLIN_1"/>
    <property type="match status" value="1"/>
</dbReference>
<dbReference type="PROSITE" id="PS50069">
    <property type="entry name" value="CULLIN_2"/>
    <property type="match status" value="1"/>
</dbReference>
<gene>
    <name type="primary">CDC53</name>
    <name type="ordered locus">YDL132W</name>
    <name type="ORF">D2190</name>
</gene>
<accession>Q12018</accession>
<accession>D6VRL7</accession>
<reference key="1">
    <citation type="journal article" date="1996" name="Mol. Cell. Biol.">
        <title>Cdc53p acts in concert with Cdc4p and Cdc34p to control the G1-to-S-phase transition and identifies a conserved family of proteins.</title>
        <authorList>
            <person name="Mathias N."/>
            <person name="Johnson S.L."/>
            <person name="Winey M."/>
            <person name="Adams A.E."/>
            <person name="Goetsch L."/>
            <person name="Pringle J.R."/>
            <person name="Byers B."/>
            <person name="Goebl M.G."/>
        </authorList>
    </citation>
    <scope>NUCLEOTIDE SEQUENCE [GENOMIC DNA]</scope>
</reference>
<reference key="2">
    <citation type="journal article" date="1996" name="Yeast">
        <title>Analysis of a 26,756 bp segment from the left arm of yeast chromosome IV.</title>
        <authorList>
            <person name="Woelfl S."/>
            <person name="Haneman V."/>
            <person name="Saluz H.P."/>
        </authorList>
    </citation>
    <scope>NUCLEOTIDE SEQUENCE [GENOMIC DNA]</scope>
    <source>
        <strain>ATCC 96604 / S288c / FY1679</strain>
    </source>
</reference>
<reference key="3">
    <citation type="journal article" date="1997" name="Nature">
        <title>The nucleotide sequence of Saccharomyces cerevisiae chromosome IV.</title>
        <authorList>
            <person name="Jacq C."/>
            <person name="Alt-Moerbe J."/>
            <person name="Andre B."/>
            <person name="Arnold W."/>
            <person name="Bahr A."/>
            <person name="Ballesta J.P.G."/>
            <person name="Bargues M."/>
            <person name="Baron L."/>
            <person name="Becker A."/>
            <person name="Biteau N."/>
            <person name="Bloecker H."/>
            <person name="Blugeon C."/>
            <person name="Boskovic J."/>
            <person name="Brandt P."/>
            <person name="Brueckner M."/>
            <person name="Buitrago M.J."/>
            <person name="Coster F."/>
            <person name="Delaveau T."/>
            <person name="del Rey F."/>
            <person name="Dujon B."/>
            <person name="Eide L.G."/>
            <person name="Garcia-Cantalejo J.M."/>
            <person name="Goffeau A."/>
            <person name="Gomez-Peris A."/>
            <person name="Granotier C."/>
            <person name="Hanemann V."/>
            <person name="Hankeln T."/>
            <person name="Hoheisel J.D."/>
            <person name="Jaeger W."/>
            <person name="Jimenez A."/>
            <person name="Jonniaux J.-L."/>
            <person name="Kraemer C."/>
            <person name="Kuester H."/>
            <person name="Laamanen P."/>
            <person name="Legros Y."/>
            <person name="Louis E.J."/>
            <person name="Moeller-Rieker S."/>
            <person name="Monnet A."/>
            <person name="Moro M."/>
            <person name="Mueller-Auer S."/>
            <person name="Nussbaumer B."/>
            <person name="Paricio N."/>
            <person name="Paulin L."/>
            <person name="Perea J."/>
            <person name="Perez-Alonso M."/>
            <person name="Perez-Ortin J.E."/>
            <person name="Pohl T.M."/>
            <person name="Prydz H."/>
            <person name="Purnelle B."/>
            <person name="Rasmussen S.W."/>
            <person name="Remacha M.A."/>
            <person name="Revuelta J.L."/>
            <person name="Rieger M."/>
            <person name="Salom D."/>
            <person name="Saluz H.P."/>
            <person name="Saiz J.E."/>
            <person name="Saren A.-M."/>
            <person name="Schaefer M."/>
            <person name="Scharfe M."/>
            <person name="Schmidt E.R."/>
            <person name="Schneider C."/>
            <person name="Scholler P."/>
            <person name="Schwarz S."/>
            <person name="Soler-Mira A."/>
            <person name="Urrestarazu L.A."/>
            <person name="Verhasselt P."/>
            <person name="Vissers S."/>
            <person name="Voet M."/>
            <person name="Volckaert G."/>
            <person name="Wagner G."/>
            <person name="Wambutt R."/>
            <person name="Wedler E."/>
            <person name="Wedler H."/>
            <person name="Woelfl S."/>
            <person name="Harris D.E."/>
            <person name="Bowman S."/>
            <person name="Brown D."/>
            <person name="Churcher C.M."/>
            <person name="Connor R."/>
            <person name="Dedman K."/>
            <person name="Gentles S."/>
            <person name="Hamlin N."/>
            <person name="Hunt S."/>
            <person name="Jones L."/>
            <person name="McDonald S."/>
            <person name="Murphy L.D."/>
            <person name="Niblett D."/>
            <person name="Odell C."/>
            <person name="Oliver K."/>
            <person name="Rajandream M.A."/>
            <person name="Richards C."/>
            <person name="Shore L."/>
            <person name="Walsh S.V."/>
            <person name="Barrell B.G."/>
            <person name="Dietrich F.S."/>
            <person name="Mulligan J.T."/>
            <person name="Allen E."/>
            <person name="Araujo R."/>
            <person name="Aviles E."/>
            <person name="Berno A."/>
            <person name="Carpenter J."/>
            <person name="Chen E."/>
            <person name="Cherry J.M."/>
            <person name="Chung E."/>
            <person name="Duncan M."/>
            <person name="Hunicke-Smith S."/>
            <person name="Hyman R.W."/>
            <person name="Komp C."/>
            <person name="Lashkari D."/>
            <person name="Lew H."/>
            <person name="Lin D."/>
            <person name="Mosedale D."/>
            <person name="Nakahara K."/>
            <person name="Namath A."/>
            <person name="Oefner P."/>
            <person name="Oh C."/>
            <person name="Petel F.X."/>
            <person name="Roberts D."/>
            <person name="Schramm S."/>
            <person name="Schroeder M."/>
            <person name="Shogren T."/>
            <person name="Shroff N."/>
            <person name="Winant A."/>
            <person name="Yelton M.A."/>
            <person name="Botstein D."/>
            <person name="Davis R.W."/>
            <person name="Johnston M."/>
            <person name="Andrews S."/>
            <person name="Brinkman R."/>
            <person name="Cooper J."/>
            <person name="Ding H."/>
            <person name="Du Z."/>
            <person name="Favello A."/>
            <person name="Fulton L."/>
            <person name="Gattung S."/>
            <person name="Greco T."/>
            <person name="Hallsworth K."/>
            <person name="Hawkins J."/>
            <person name="Hillier L.W."/>
            <person name="Jier M."/>
            <person name="Johnson D."/>
            <person name="Johnston L."/>
            <person name="Kirsten J."/>
            <person name="Kucaba T."/>
            <person name="Langston Y."/>
            <person name="Latreille P."/>
            <person name="Le T."/>
            <person name="Mardis E."/>
            <person name="Menezes S."/>
            <person name="Miller N."/>
            <person name="Nhan M."/>
            <person name="Pauley A."/>
            <person name="Peluso D."/>
            <person name="Rifkin L."/>
            <person name="Riles L."/>
            <person name="Taich A."/>
            <person name="Trevaskis E."/>
            <person name="Vignati D."/>
            <person name="Wilcox L."/>
            <person name="Wohldman P."/>
            <person name="Vaudin M."/>
            <person name="Wilson R."/>
            <person name="Waterston R."/>
            <person name="Albermann K."/>
            <person name="Hani J."/>
            <person name="Heumann K."/>
            <person name="Kleine K."/>
            <person name="Mewes H.-W."/>
            <person name="Zollner A."/>
            <person name="Zaccaria P."/>
        </authorList>
    </citation>
    <scope>NUCLEOTIDE SEQUENCE [LARGE SCALE GENOMIC DNA]</scope>
    <source>
        <strain>ATCC 204508 / S288c</strain>
    </source>
</reference>
<reference key="4">
    <citation type="journal article" date="2014" name="G3 (Bethesda)">
        <title>The reference genome sequence of Saccharomyces cerevisiae: Then and now.</title>
        <authorList>
            <person name="Engel S.R."/>
            <person name="Dietrich F.S."/>
            <person name="Fisk D.G."/>
            <person name="Binkley G."/>
            <person name="Balakrishnan R."/>
            <person name="Costanzo M.C."/>
            <person name="Dwight S.S."/>
            <person name="Hitz B.C."/>
            <person name="Karra K."/>
            <person name="Nash R.S."/>
            <person name="Weng S."/>
            <person name="Wong E.D."/>
            <person name="Lloyd P."/>
            <person name="Skrzypek M.S."/>
            <person name="Miyasato S.R."/>
            <person name="Simison M."/>
            <person name="Cherry J.M."/>
        </authorList>
    </citation>
    <scope>GENOME REANNOTATION</scope>
    <source>
        <strain>ATCC 204508 / S288c</strain>
    </source>
</reference>
<reference key="5">
    <citation type="journal article" date="1994" name="EMBO J.">
        <title>Regulated degradation of the transcription factor Gcn4.</title>
        <authorList>
            <person name="Kornitzer D."/>
            <person name="Raboy B."/>
            <person name="Kulka R.G."/>
            <person name="Fink G.R."/>
        </authorList>
    </citation>
    <scope>FUNCTION</scope>
</reference>
<reference key="6">
    <citation type="journal article" date="1997" name="Cell">
        <title>F-box proteins are receptors that recruit phosphorylated substrates to the SCF ubiquitin-ligase complex.</title>
        <authorList>
            <person name="Skowyra D."/>
            <person name="Craig K.L."/>
            <person name="Tyers M."/>
            <person name="Elledge S.J."/>
            <person name="Harper J.W."/>
        </authorList>
    </citation>
    <scope>FUNCTION</scope>
    <scope>SUBUNIT</scope>
</reference>
<reference key="7">
    <citation type="journal article" date="1997" name="Cell">
        <title>A complex of Cdc4p, Skp1p, and Cdc53p/cullin catalyzes ubiquitination of the phosphorylated CDK inhibitor Sic1p.</title>
        <authorList>
            <person name="Feldman R.M."/>
            <person name="Correll C.C."/>
            <person name="Kaplan K.B."/>
            <person name="Deshaies R.J."/>
        </authorList>
    </citation>
    <scope>FUNCTION</scope>
    <scope>SUBUNIT</scope>
</reference>
<reference key="8">
    <citation type="journal article" date="1997" name="EMBO J.">
        <title>The Cdc4/34/53 pathway targets Cdc6p for proteolysis in budding yeast.</title>
        <authorList>
            <person name="Drury L.S."/>
            <person name="Perkins G."/>
            <person name="Diffley J.F."/>
        </authorList>
    </citation>
    <scope>FUNCTION</scope>
</reference>
<reference key="9">
    <citation type="journal article" date="1998" name="EMBO J.">
        <title>The Cdc42p effector Gic2p is targeted for ubiquitin-dependent degradation by the SCFGrr1 complex.</title>
        <authorList>
            <person name="Jaquenoud M."/>
            <person name="Gulli M.P."/>
            <person name="Peter K."/>
            <person name="Peter M."/>
        </authorList>
    </citation>
    <scope>FUNCTION</scope>
</reference>
<reference key="10">
    <citation type="journal article" date="1998" name="Genes Dev.">
        <title>Cdc53 is a scaffold protein for multiple Cdc34/Skp1/F-box protein complexes that regulate cell division and methionine biosynthesis in yeast.</title>
        <authorList>
            <person name="Patton E.E."/>
            <person name="Willems A.R."/>
            <person name="Sa D."/>
            <person name="Kuras L."/>
            <person name="Thomas D."/>
            <person name="Craig K.L."/>
            <person name="Tyers M."/>
        </authorList>
    </citation>
    <scope>FUNCTION</scope>
    <scope>SUBUNIT</scope>
    <scope>MUTAGENESIS OF ARG-488</scope>
</reference>
<reference key="11">
    <citation type="journal article" date="1999" name="Genes Dev.">
        <title>Cdc53/cullin and the essential Hrt1 RING-H2 subunit of SCF define a ubiquitin ligase module that activates the E2 enzyme Cdc34.</title>
        <authorList>
            <person name="Seol J.H."/>
            <person name="Feldman R.M.R."/>
            <person name="Zachariae W."/>
            <person name="Shevchenko A."/>
            <person name="Correll C.C."/>
            <person name="Lyapina S."/>
            <person name="Chi Y."/>
            <person name="Galova M."/>
            <person name="Claypool J."/>
            <person name="Sandmeyer S."/>
            <person name="Nasmyth K."/>
            <person name="Shevchenko A."/>
            <person name="Deshaies R.J."/>
        </authorList>
    </citation>
    <scope>INTERACTION WITH HRT1</scope>
</reference>
<reference key="12">
    <citation type="journal article" date="1999" name="Science">
        <title>Reconstitution of G1 cyclin ubiquitination with complexes containing SCFGrr1 and Rbx1.</title>
        <authorList>
            <person name="Skowyra D."/>
            <person name="Koepp D.M."/>
            <person name="Kamura T."/>
            <person name="Conrad M.N."/>
            <person name="Conaway R.C."/>
            <person name="Conaway J.W."/>
            <person name="Elledge S.J."/>
            <person name="Harper J.W."/>
        </authorList>
    </citation>
    <scope>FUNCTION</scope>
    <scope>RECONSTITUTION OF THE SKF(GRR1)COMPLEX</scope>
</reference>
<reference key="13">
    <citation type="journal article" date="2001" name="Nat. Cell Biol.">
        <title>Skp1 forms multiple protein complexes, including RAVE, a regulator of V-ATPase assembly.</title>
        <authorList>
            <person name="Seol J.H."/>
            <person name="Shevchenko A."/>
            <person name="Shevchenko A."/>
            <person name="Deshaies R.J."/>
        </authorList>
    </citation>
    <scope>INTERACTION WITH DCN1; YBR280C; YLR224W AND YLR352W</scope>
</reference>
<reference key="14">
    <citation type="journal article" date="2003" name="Nature">
        <title>Global analysis of protein localization in budding yeast.</title>
        <authorList>
            <person name="Huh W.-K."/>
            <person name="Falvo J.V."/>
            <person name="Gerke L.C."/>
            <person name="Carroll A.S."/>
            <person name="Howson R.W."/>
            <person name="Weissman J.S."/>
            <person name="O'Shea E.K."/>
        </authorList>
    </citation>
    <scope>SUBCELLULAR LOCATION [LARGE SCALE ANALYSIS]</scope>
</reference>
<reference key="15">
    <citation type="journal article" date="2003" name="Nature">
        <title>Global analysis of protein expression in yeast.</title>
        <authorList>
            <person name="Ghaemmaghami S."/>
            <person name="Huh W.-K."/>
            <person name="Bower K."/>
            <person name="Howson R.W."/>
            <person name="Belle A."/>
            <person name="Dephoure N."/>
            <person name="O'Shea E.K."/>
            <person name="Weissman J.S."/>
        </authorList>
    </citation>
    <scope>LEVEL OF PROTEIN EXPRESSION [LARGE SCALE ANALYSIS]</scope>
</reference>
<reference key="16">
    <citation type="journal article" date="2004" name="Proteins">
        <title>Functional interaction of 13 yeast SCF complexes with a set of yeast E2 enzymes in vitro.</title>
        <authorList>
            <person name="Kus B.M."/>
            <person name="Caldon C.E."/>
            <person name="Andorn-Broza R."/>
            <person name="Edwards A.M."/>
        </authorList>
    </citation>
    <scope>RECONSTITUTION OF THE SCF(DIA2) COMPLEX</scope>
    <scope>RECONSTITUTION OF THE SCF(YDR131C) COMPLEX</scope>
    <scope>RECONSTITUTION OF THE SCF(YDR306C) COMPLEX</scope>
    <scope>RECONSTITUTION OF THE SCF(YLR224W) COMPLEX</scope>
    <scope>RECONSTITUTION OF THE SCF(YJL149W) COMPLEX</scope>
    <scope>RECONSTITUTION OF THE SCF(YNL311C) COMPLEX</scope>
    <scope>RECONSTITUTION OF THE SCF(MDM30) COMPLEX</scope>
    <scope>RECONSTITUTION OF THE SCF(CDC4) COMPLEX</scope>
    <scope>RECONSTITUTION OF THE SCF(UFO1) COMPLEX</scope>
    <scope>RECONSTITUTION OF THE SCF(GRR1) COMPLEX</scope>
    <scope>RECONSTITUTION OF THE SCF(HRT3) COMPLEX</scope>
</reference>
<reference key="17">
    <citation type="journal article" date="2006" name="Mol. Biol. Cell">
        <title>The F-box protein Dia2 regulates DNA replication.</title>
        <authorList>
            <person name="Koepp D.M."/>
            <person name="Kile A.C."/>
            <person name="Swaminathan S."/>
            <person name="Rodriguez-Rivera V."/>
        </authorList>
    </citation>
    <scope>IDENTIFICATION IN THE SCF(DIA2) COMPLEX</scope>
    <scope>FUNCTION OF THE SCF(DIA2) COMPLEX</scope>
</reference>
<reference key="18">
    <citation type="journal article" date="2009" name="EMBO J.">
        <title>A longevity protein, Lag2, interacts with SCF complex and regulates SCF function.</title>
        <authorList>
            <person name="Liu Y."/>
            <person name="Mimura S."/>
            <person name="Kishi T."/>
            <person name="Kamura T."/>
        </authorList>
    </citation>
    <scope>INTERACTION WITH LAG2</scope>
</reference>
<reference key="19">
    <citation type="journal article" date="2009" name="EMBO J.">
        <title>Cullin neddylation and substrate-adaptors counteract SCF inhibition by the CAND1-like protein Lag2 in Saccharomyces cerevisiae.</title>
        <authorList>
            <person name="Siergiejuk E."/>
            <person name="Scott D.C."/>
            <person name="Schulman B.A."/>
            <person name="Hofmann K."/>
            <person name="Kurz T."/>
            <person name="Peter M."/>
        </authorList>
    </citation>
    <scope>INTERACTION WITH LAG2</scope>
</reference>
<feature type="chain" id="PRO_0000119805" description="Cell division control protein 53">
    <location>
        <begin position="1"/>
        <end position="815"/>
    </location>
</feature>
<feature type="domain" description="Cullin neddylation" evidence="3">
    <location>
        <begin position="746"/>
        <end position="807"/>
    </location>
</feature>
<feature type="region of interest" description="Required for interaction with SKP1/CBF3D and F-box protein">
    <location>
        <begin position="9"/>
        <end position="280"/>
    </location>
</feature>
<feature type="region of interest" description="Required for interaction with CDC34/UBC3">
    <location>
        <begin position="448"/>
        <end position="748"/>
    </location>
</feature>
<feature type="cross-link" description="Glycyl lysine isopeptide (Lys-Gly) (interchain with G-Cter in NEDD8)" evidence="2">
    <location>
        <position position="760"/>
    </location>
</feature>
<feature type="mutagenesis site" description="Prevents CDC34/UBC3 interaction." evidence="17">
    <original>R</original>
    <variation>C</variation>
    <location>
        <position position="488"/>
    </location>
</feature>
<feature type="helix" evidence="19">
    <location>
        <begin position="735"/>
        <end position="762"/>
    </location>
</feature>
<feature type="strand" evidence="19">
    <location>
        <begin position="763"/>
        <end position="766"/>
    </location>
</feature>
<feature type="helix" evidence="19">
    <location>
        <begin position="767"/>
        <end position="778"/>
    </location>
</feature>
<feature type="turn" evidence="19">
    <location>
        <begin position="779"/>
        <end position="781"/>
    </location>
</feature>
<feature type="helix" evidence="19">
    <location>
        <begin position="786"/>
        <end position="798"/>
    </location>
</feature>
<feature type="strand" evidence="19">
    <location>
        <begin position="801"/>
        <end position="804"/>
    </location>
</feature>
<feature type="strand" evidence="19">
    <location>
        <begin position="808"/>
        <end position="813"/>
    </location>
</feature>
<comment type="function">
    <text evidence="5 10 13 14 15 16 17 18">Core component of multiple cullin-RING-based SCF (SKP1-CUL1-F-box) E3 ubiquitin-protein ligase complexes which mediate the ubiquitination and subsequent proteasomal degradation of target proteins. As a scaffold protein may contribute to catalysis through positioning of the substrate and the ubiquitin-conjugating enzyme. The SCF complex associates with CDC34 as the E2 ubiquitin-conjugating enzyme. The functional specificity of the SCF complex depends on the type of F-box protein. SCF(CDC4) controls the G1-to-S phase transition; it directs ubiquitination of the phosphorylated CDK inhibitor SIC1 and of CDC6. SCF(CDC4) directs ubiquitination of GCN4. SCF(GRR1) directs ubiquitination of phosphorylated CLN1, CLN2 and GIC2. SCF(MET30) directs ubiquitination of MET4. SCF(DIA2) is specifically involved in the pheromone induced degradation of phosphorylated TEC1. SCF(MDM30) seems to direct ubiquitination of FZ01. Involved in the regulation of methionine biosynthesis genes.</text>
</comment>
<comment type="subunit">
    <text evidence="6 7 10 11 12 15 16 17">Component of multiple SCF (SKP1-CUL1-F-box) E3 ubiquitin-protein ligase complexes formed of CUL1, SKP1/HRT1, RBX1 and a variable F-box domain-containing protein as substrate-specific adapter. Component of the SCF(CDC4) complex containing CDC4. Component of the SCF(MET30) complex containing MET30. Component of the SCF(GRR1) complex containing GRR1. Component of the probable SCF(DIA2) complex containing DIA2. Component of the probable SCF(YDR131C) complex containing YDR131C. Component of the probable SCF(YDR306C) complex containing YDR306C. Component of the probable SCF(YLR224W) complex containing YLR224W. Component of the probable SCF(YJL149W) complex containing YJL149W. Component of the probable SCF(YNL311C) complex containing YNL311C. Component of the probable SCF(MDM30) complex containing MDM30. Component of the probable SCF(UFO1) complex containing UFO1. Component of the probable SCF(HRT3) complex containing HRT3. Component of the probable SCF(YBR280C) complex containing YBR280C. Component of the probable SCF(YBR352W) complex containing YBR352W. Interacts with DCN1, YBR280C, YLR224W and YLR352W. The unneddylated form interacts with LAG2/CAND1 and the interaction mediates the exchange of the F-box substrate-specific subunit.</text>
</comment>
<comment type="interaction">
    <interactant intactId="EBI-4321">
        <id>Q12018</id>
    </interactant>
    <interactant intactId="EBI-19730">
        <id>P14682</id>
        <label>CDC34</label>
    </interactant>
    <organismsDiffer>false</organismsDiffer>
    <experiments>4</experiments>
</comment>
<comment type="interaction">
    <interactant intactId="EBI-4321">
        <id>Q12018</id>
    </interactant>
    <interactant intactId="EBI-4434">
        <id>P07834</id>
        <label>CDC4</label>
    </interactant>
    <organismsDiffer>false</organismsDiffer>
    <experiments>9</experiments>
</comment>
<comment type="interaction">
    <interactant intactId="EBI-4321">
        <id>Q12018</id>
    </interactant>
    <interactant intactId="EBI-29871">
        <id>Q12395</id>
        <label>DCN1</label>
    </interactant>
    <organismsDiffer>false</organismsDiffer>
    <experiments>3</experiments>
</comment>
<comment type="interaction">
    <interactant intactId="EBI-4321">
        <id>Q12018</id>
    </interactant>
    <interactant intactId="EBI-7898">
        <id>P24814</id>
        <label>GRR1</label>
    </interactant>
    <organismsDiffer>false</organismsDiffer>
    <experiments>10</experiments>
</comment>
<comment type="interaction">
    <interactant intactId="EBI-4321">
        <id>Q12018</id>
    </interactant>
    <interactant intactId="EBI-31686">
        <id>Q08273</id>
        <label>HRT1</label>
    </interactant>
    <organismsDiffer>false</organismsDiffer>
    <experiments>9</experiments>
</comment>
<comment type="interaction">
    <interactant intactId="EBI-4321">
        <id>Q12018</id>
    </interactant>
    <interactant intactId="EBI-2045650">
        <id>Q92325</id>
        <label>LAG2</label>
    </interactant>
    <organismsDiffer>false</organismsDiffer>
    <experiments>10</experiments>
</comment>
<comment type="interaction">
    <interactant intactId="EBI-4321">
        <id>Q12018</id>
    </interactant>
    <interactant intactId="EBI-11507">
        <id>P39014</id>
        <label>MET30</label>
    </interactant>
    <organismsDiffer>false</organismsDiffer>
    <experiments>11</experiments>
</comment>
<comment type="interaction">
    <interactant intactId="EBI-4321">
        <id>Q12018</id>
    </interactant>
    <interactant intactId="EBI-21172">
        <id>P38352</id>
        <label>SAF1</label>
    </interactant>
    <organismsDiffer>false</organismsDiffer>
    <experiments>8</experiments>
</comment>
<comment type="interaction">
    <interactant intactId="EBI-4321">
        <id>Q12018</id>
    </interactant>
    <interactant intactId="EBI-4090">
        <id>P52286</id>
        <label>SKP1</label>
    </interactant>
    <organismsDiffer>false</organismsDiffer>
    <experiments>30</experiments>
</comment>
<comment type="interaction">
    <interactant intactId="EBI-4321">
        <id>Q12018</id>
    </interactant>
    <interactant intactId="EBI-32041">
        <id>Q06682</id>
        <label>UBX5</label>
    </interactant>
    <organismsDiffer>false</organismsDiffer>
    <experiments>2</experiments>
</comment>
<comment type="subcellular location">
    <subcellularLocation>
        <location evidence="8">Cytoplasm</location>
    </subcellularLocation>
    <subcellularLocation>
        <location evidence="8">Nucleus</location>
    </subcellularLocation>
</comment>
<comment type="PTM">
    <text evidence="1">Neddylated; enhancing the ubiquitin-ligase activity.</text>
</comment>
<comment type="miscellaneous">
    <text evidence="9">Present with 377 molecules/cell in log phase SD medium.</text>
</comment>
<comment type="similarity">
    <text evidence="4">Belongs to the cullin family.</text>
</comment>
<proteinExistence type="evidence at protein level"/>
<keyword id="KW-0002">3D-structure</keyword>
<keyword id="KW-0131">Cell cycle</keyword>
<keyword id="KW-0132">Cell division</keyword>
<keyword id="KW-0963">Cytoplasm</keyword>
<keyword id="KW-1017">Isopeptide bond</keyword>
<keyword id="KW-0539">Nucleus</keyword>
<keyword id="KW-1185">Reference proteome</keyword>
<keyword id="KW-0832">Ubl conjugation</keyword>
<organism>
    <name type="scientific">Saccharomyces cerevisiae (strain ATCC 204508 / S288c)</name>
    <name type="common">Baker's yeast</name>
    <dbReference type="NCBI Taxonomy" id="559292"/>
    <lineage>
        <taxon>Eukaryota</taxon>
        <taxon>Fungi</taxon>
        <taxon>Dikarya</taxon>
        <taxon>Ascomycota</taxon>
        <taxon>Saccharomycotina</taxon>
        <taxon>Saccharomycetes</taxon>
        <taxon>Saccharomycetales</taxon>
        <taxon>Saccharomycetaceae</taxon>
        <taxon>Saccharomyces</taxon>
    </lineage>
</organism>
<evidence type="ECO:0000250" key="1">
    <source>
        <dbReference type="UniProtKB" id="P47050"/>
    </source>
</evidence>
<evidence type="ECO:0000250" key="2">
    <source>
        <dbReference type="UniProtKB" id="Q13616"/>
    </source>
</evidence>
<evidence type="ECO:0000255" key="3"/>
<evidence type="ECO:0000255" key="4">
    <source>
        <dbReference type="PROSITE-ProRule" id="PRU00330"/>
    </source>
</evidence>
<evidence type="ECO:0000269" key="5">
    <source>
    </source>
</evidence>
<evidence type="ECO:0000269" key="6">
    <source>
    </source>
</evidence>
<evidence type="ECO:0000269" key="7">
    <source>
    </source>
</evidence>
<evidence type="ECO:0000269" key="8">
    <source>
    </source>
</evidence>
<evidence type="ECO:0000269" key="9">
    <source>
    </source>
</evidence>
<evidence type="ECO:0000269" key="10">
    <source>
    </source>
</evidence>
<evidence type="ECO:0000269" key="11">
    <source>
    </source>
</evidence>
<evidence type="ECO:0000269" key="12">
    <source>
    </source>
</evidence>
<evidence type="ECO:0000269" key="13">
    <source>
    </source>
</evidence>
<evidence type="ECO:0000269" key="14">
    <source>
    </source>
</evidence>
<evidence type="ECO:0000269" key="15">
    <source>
    </source>
</evidence>
<evidence type="ECO:0000269" key="16">
    <source>
    </source>
</evidence>
<evidence type="ECO:0000269" key="17">
    <source>
    </source>
</evidence>
<evidence type="ECO:0000269" key="18">
    <source>
    </source>
</evidence>
<evidence type="ECO:0007829" key="19">
    <source>
        <dbReference type="PDB" id="3O2P"/>
    </source>
</evidence>
<sequence>MSETLPRSDDLEATWNFIEPGINQILGNEKNQASTSKRVYKILSPTMYMEVYTAIYNYCVNKSRSSGHFSTDSRTGQSTILVGSEIYEKLKNYLKNYILNFKQSNSETFLQFYVKRWKRFTIGAIFLNHAFDYMNRYWVQKERSDGKRHIFDVNTLCLMTWKEVMFDPSKDVLINELLDQVTLGREGQIIQRSNISTAIKSLVALGIDPQDLKKLNLNVYIQVFEKPFLKKTQEYYTQYTNDYLEKHSVTEYIFEAHEIIKREEKAMTIYWDDHTKKPLSMALNKVLITDHIEKLENEFVVLLDARDIEKITSLYALIRRDFTLIPRMASVFENYVKKTGENEISSLLAMHKHNIMKNENANPKKLALMTAHSLSPKDYIKKLLEVHDIFSKIFNESFPDDIPLAKALDNACGAFININEFALPAGSPKSATSKTSEMLAKYSDILLKKATKPEVASDMSDEDIITIFKYLTDKDAFETHYRRLFAKRLIHGTSTSAEDEENIIQRLQAANSMEYTGKITKMFQDIRLSKILEDDFAVALKNEPDYSKAKYPDLQPFVLAENMWPFSYQEVEFKLPKELVPSHEKLKESYSQKHNGRILKWLWPLCRGELKADIGKPGRMPFNFTVTLFQMAILLLYNDADVLTLENIQEGTSLTIQHIAAAMVPFIKFKLIQQVPPGLDALVKPETQFKLSRPYKALKTNINFASGVKNDILQSLSGGGHDNHGNKLGNKRLTEDERIEKELNTERQIFLEACIVRIMKAKRNLPHTTLVNECIAQSHQRFNAKVSMVKRAIDSLIQKGYLQRGDDGESYAYLA</sequence>
<name>CDC53_YEAST</name>
<protein>
    <recommendedName>
        <fullName>Cell division control protein 53</fullName>
    </recommendedName>
    <alternativeName>
        <fullName>Cullin-A</fullName>
    </alternativeName>
    <alternativeName>
        <fullName>E3 ubiquitin ligase complex SCF subunit CDC53</fullName>
    </alternativeName>
</protein>